<accession>Q5PCF3</accession>
<organism>
    <name type="scientific">Salmonella paratyphi A (strain ATCC 9150 / SARB42)</name>
    <dbReference type="NCBI Taxonomy" id="295319"/>
    <lineage>
        <taxon>Bacteria</taxon>
        <taxon>Pseudomonadati</taxon>
        <taxon>Pseudomonadota</taxon>
        <taxon>Gammaproteobacteria</taxon>
        <taxon>Enterobacterales</taxon>
        <taxon>Enterobacteriaceae</taxon>
        <taxon>Salmonella</taxon>
    </lineage>
</organism>
<protein>
    <recommendedName>
        <fullName evidence="1">UDP-2,3-diacylglucosamine hydrolase</fullName>
        <ecNumber evidence="1">3.6.1.54</ecNumber>
    </recommendedName>
    <alternativeName>
        <fullName evidence="1">UDP-2,3-diacylglucosamine diphosphatase</fullName>
    </alternativeName>
</protein>
<name>LPXH_SALPA</name>
<comment type="function">
    <text evidence="1">Hydrolyzes the pyrophosphate bond of UDP-2,3-diacylglucosamine to yield 2,3-diacylglucosamine 1-phosphate (lipid X) and UMP by catalyzing the attack of water at the alpha-P atom. Involved in the biosynthesis of lipid A, a phosphorylated glycolipid that anchors the lipopolysaccharide to the outer membrane of the cell.</text>
</comment>
<comment type="catalytic activity">
    <reaction evidence="1">
        <text>UDP-2-N,3-O-bis[(3R)-3-hydroxytetradecanoyl]-alpha-D-glucosamine + H2O = 2-N,3-O-bis[(3R)-3-hydroxytetradecanoyl]-alpha-D-glucosaminyl 1-phosphate + UMP + 2 H(+)</text>
        <dbReference type="Rhea" id="RHEA:25213"/>
        <dbReference type="ChEBI" id="CHEBI:15377"/>
        <dbReference type="ChEBI" id="CHEBI:15378"/>
        <dbReference type="ChEBI" id="CHEBI:57865"/>
        <dbReference type="ChEBI" id="CHEBI:57957"/>
        <dbReference type="ChEBI" id="CHEBI:78847"/>
        <dbReference type="EC" id="3.6.1.54"/>
    </reaction>
</comment>
<comment type="cofactor">
    <cofactor evidence="1">
        <name>Mn(2+)</name>
        <dbReference type="ChEBI" id="CHEBI:29035"/>
    </cofactor>
    <text evidence="1">Binds 2 Mn(2+) ions per subunit in a binuclear metal center.</text>
</comment>
<comment type="pathway">
    <text evidence="1">Glycolipid biosynthesis; lipid IV(A) biosynthesis; lipid IV(A) from (3R)-3-hydroxytetradecanoyl-[acyl-carrier-protein] and UDP-N-acetyl-alpha-D-glucosamine: step 4/6.</text>
</comment>
<comment type="subcellular location">
    <subcellularLocation>
        <location evidence="1">Cell inner membrane</location>
        <topology evidence="1">Peripheral membrane protein</topology>
        <orientation evidence="1">Cytoplasmic side</orientation>
    </subcellularLocation>
</comment>
<comment type="similarity">
    <text evidence="1">Belongs to the LpxH family.</text>
</comment>
<dbReference type="EC" id="3.6.1.54" evidence="1"/>
<dbReference type="EMBL" id="CP000026">
    <property type="protein sequence ID" value="AAV78077.1"/>
    <property type="molecule type" value="Genomic_DNA"/>
</dbReference>
<dbReference type="RefSeq" id="WP_000212289.1">
    <property type="nucleotide sequence ID" value="NC_006511.1"/>
</dbReference>
<dbReference type="SMR" id="Q5PCF3"/>
<dbReference type="KEGG" id="spt:SPA2188"/>
<dbReference type="HOGENOM" id="CLU_074586_0_0_6"/>
<dbReference type="UniPathway" id="UPA00359">
    <property type="reaction ID" value="UER00480"/>
</dbReference>
<dbReference type="Proteomes" id="UP000008185">
    <property type="component" value="Chromosome"/>
</dbReference>
<dbReference type="GO" id="GO:0005737">
    <property type="term" value="C:cytoplasm"/>
    <property type="evidence" value="ECO:0007669"/>
    <property type="project" value="InterPro"/>
</dbReference>
<dbReference type="GO" id="GO:0019897">
    <property type="term" value="C:extrinsic component of plasma membrane"/>
    <property type="evidence" value="ECO:0007669"/>
    <property type="project" value="UniProtKB-UniRule"/>
</dbReference>
<dbReference type="GO" id="GO:0030145">
    <property type="term" value="F:manganese ion binding"/>
    <property type="evidence" value="ECO:0007669"/>
    <property type="project" value="UniProtKB-UniRule"/>
</dbReference>
<dbReference type="GO" id="GO:0008758">
    <property type="term" value="F:UDP-2,3-diacylglucosamine hydrolase activity"/>
    <property type="evidence" value="ECO:0007669"/>
    <property type="project" value="UniProtKB-UniRule"/>
</dbReference>
<dbReference type="GO" id="GO:0009245">
    <property type="term" value="P:lipid A biosynthetic process"/>
    <property type="evidence" value="ECO:0007669"/>
    <property type="project" value="UniProtKB-UniRule"/>
</dbReference>
<dbReference type="CDD" id="cd07398">
    <property type="entry name" value="MPP_YbbF-LpxH"/>
    <property type="match status" value="1"/>
</dbReference>
<dbReference type="FunFam" id="3.60.21.10:FF:000012">
    <property type="entry name" value="UDP-2,3-diacylglucosamine hydrolase"/>
    <property type="match status" value="1"/>
</dbReference>
<dbReference type="Gene3D" id="3.60.21.10">
    <property type="match status" value="1"/>
</dbReference>
<dbReference type="HAMAP" id="MF_00575">
    <property type="entry name" value="LpxH"/>
    <property type="match status" value="1"/>
</dbReference>
<dbReference type="InterPro" id="IPR004843">
    <property type="entry name" value="Calcineurin-like_PHP_ApaH"/>
</dbReference>
<dbReference type="InterPro" id="IPR043461">
    <property type="entry name" value="LpxH-like"/>
</dbReference>
<dbReference type="InterPro" id="IPR029052">
    <property type="entry name" value="Metallo-depent_PP-like"/>
</dbReference>
<dbReference type="InterPro" id="IPR010138">
    <property type="entry name" value="UDP-diacylglucosamine_Hdrlase"/>
</dbReference>
<dbReference type="NCBIfam" id="TIGR01854">
    <property type="entry name" value="lipid_A_lpxH"/>
    <property type="match status" value="1"/>
</dbReference>
<dbReference type="NCBIfam" id="NF003743">
    <property type="entry name" value="PRK05340.1"/>
    <property type="match status" value="1"/>
</dbReference>
<dbReference type="PANTHER" id="PTHR34990:SF1">
    <property type="entry name" value="UDP-2,3-DIACYLGLUCOSAMINE HYDROLASE"/>
    <property type="match status" value="1"/>
</dbReference>
<dbReference type="PANTHER" id="PTHR34990">
    <property type="entry name" value="UDP-2,3-DIACYLGLUCOSAMINE HYDROLASE-RELATED"/>
    <property type="match status" value="1"/>
</dbReference>
<dbReference type="Pfam" id="PF00149">
    <property type="entry name" value="Metallophos"/>
    <property type="match status" value="1"/>
</dbReference>
<dbReference type="SUPFAM" id="SSF56300">
    <property type="entry name" value="Metallo-dependent phosphatases"/>
    <property type="match status" value="1"/>
</dbReference>
<feature type="chain" id="PRO_1000025079" description="UDP-2,3-diacylglucosamine hydrolase">
    <location>
        <begin position="1"/>
        <end position="240"/>
    </location>
</feature>
<feature type="binding site" evidence="1">
    <location>
        <position position="8"/>
    </location>
    <ligand>
        <name>Mn(2+)</name>
        <dbReference type="ChEBI" id="CHEBI:29035"/>
        <label>1</label>
    </ligand>
</feature>
<feature type="binding site" evidence="1">
    <location>
        <position position="10"/>
    </location>
    <ligand>
        <name>Mn(2+)</name>
        <dbReference type="ChEBI" id="CHEBI:29035"/>
        <label>1</label>
    </ligand>
</feature>
<feature type="binding site" evidence="1">
    <location>
        <position position="41"/>
    </location>
    <ligand>
        <name>Mn(2+)</name>
        <dbReference type="ChEBI" id="CHEBI:29035"/>
        <label>1</label>
    </ligand>
</feature>
<feature type="binding site" evidence="1">
    <location>
        <position position="41"/>
    </location>
    <ligand>
        <name>Mn(2+)</name>
        <dbReference type="ChEBI" id="CHEBI:29035"/>
        <label>2</label>
    </ligand>
</feature>
<feature type="binding site" evidence="1">
    <location>
        <begin position="79"/>
        <end position="80"/>
    </location>
    <ligand>
        <name>substrate</name>
    </ligand>
</feature>
<feature type="binding site" evidence="1">
    <location>
        <position position="79"/>
    </location>
    <ligand>
        <name>Mn(2+)</name>
        <dbReference type="ChEBI" id="CHEBI:29035"/>
        <label>2</label>
    </ligand>
</feature>
<feature type="binding site" evidence="1">
    <location>
        <position position="114"/>
    </location>
    <ligand>
        <name>Mn(2+)</name>
        <dbReference type="ChEBI" id="CHEBI:29035"/>
        <label>2</label>
    </ligand>
</feature>
<feature type="binding site" evidence="1">
    <location>
        <position position="122"/>
    </location>
    <ligand>
        <name>substrate</name>
    </ligand>
</feature>
<feature type="binding site" evidence="1">
    <location>
        <position position="160"/>
    </location>
    <ligand>
        <name>substrate</name>
    </ligand>
</feature>
<feature type="binding site" evidence="1">
    <location>
        <position position="164"/>
    </location>
    <ligand>
        <name>substrate</name>
    </ligand>
</feature>
<feature type="binding site" evidence="1">
    <location>
        <position position="167"/>
    </location>
    <ligand>
        <name>substrate</name>
    </ligand>
</feature>
<feature type="binding site" evidence="1">
    <location>
        <position position="195"/>
    </location>
    <ligand>
        <name>Mn(2+)</name>
        <dbReference type="ChEBI" id="CHEBI:29035"/>
        <label>2</label>
    </ligand>
</feature>
<feature type="binding site" evidence="1">
    <location>
        <position position="195"/>
    </location>
    <ligand>
        <name>substrate</name>
    </ligand>
</feature>
<feature type="binding site" evidence="1">
    <location>
        <position position="197"/>
    </location>
    <ligand>
        <name>Mn(2+)</name>
        <dbReference type="ChEBI" id="CHEBI:29035"/>
        <label>1</label>
    </ligand>
</feature>
<evidence type="ECO:0000255" key="1">
    <source>
        <dbReference type="HAMAP-Rule" id="MF_00575"/>
    </source>
</evidence>
<proteinExistence type="inferred from homology"/>
<gene>
    <name evidence="1" type="primary">lpxH</name>
    <name type="ordered locus">SPA2188</name>
</gene>
<keyword id="KW-0997">Cell inner membrane</keyword>
<keyword id="KW-1003">Cell membrane</keyword>
<keyword id="KW-0378">Hydrolase</keyword>
<keyword id="KW-0441">Lipid A biosynthesis</keyword>
<keyword id="KW-0444">Lipid biosynthesis</keyword>
<keyword id="KW-0443">Lipid metabolism</keyword>
<keyword id="KW-0464">Manganese</keyword>
<keyword id="KW-0472">Membrane</keyword>
<keyword id="KW-0479">Metal-binding</keyword>
<sequence>MATLFIADLHLQTEEPAIVAGFLRFLAVEARQADALYILGDLFEAWIGDDDPNPLHREMAVAIKSLVDSGVPCFFIHGNRDFLIGKRFARESGMTLLPQEKVLDLYGRNVLIMHGDTLCTDDAGYQAFRAKVHNPWVQRLFLTLPLFIRRRIAARMRAGSKAANSSKSLDIMDVNAQTVVAEMEKHRVQWLIHGHTHRPAVHELSANDQPAFRVVLGAWHHEGSMVKVTPDNVELIAFPL</sequence>
<reference key="1">
    <citation type="journal article" date="2004" name="Nat. Genet.">
        <title>Comparison of genome degradation in Paratyphi A and Typhi, human-restricted serovars of Salmonella enterica that cause typhoid.</title>
        <authorList>
            <person name="McClelland M."/>
            <person name="Sanderson K.E."/>
            <person name="Clifton S.W."/>
            <person name="Latreille P."/>
            <person name="Porwollik S."/>
            <person name="Sabo A."/>
            <person name="Meyer R."/>
            <person name="Bieri T."/>
            <person name="Ozersky P."/>
            <person name="McLellan M."/>
            <person name="Harkins C.R."/>
            <person name="Wang C."/>
            <person name="Nguyen C."/>
            <person name="Berghoff A."/>
            <person name="Elliott G."/>
            <person name="Kohlberg S."/>
            <person name="Strong C."/>
            <person name="Du F."/>
            <person name="Carter J."/>
            <person name="Kremizki C."/>
            <person name="Layman D."/>
            <person name="Leonard S."/>
            <person name="Sun H."/>
            <person name="Fulton L."/>
            <person name="Nash W."/>
            <person name="Miner T."/>
            <person name="Minx P."/>
            <person name="Delehaunty K."/>
            <person name="Fronick C."/>
            <person name="Magrini V."/>
            <person name="Nhan M."/>
            <person name="Warren W."/>
            <person name="Florea L."/>
            <person name="Spieth J."/>
            <person name="Wilson R.K."/>
        </authorList>
    </citation>
    <scope>NUCLEOTIDE SEQUENCE [LARGE SCALE GENOMIC DNA]</scope>
    <source>
        <strain>ATCC 9150 / SARB42</strain>
    </source>
</reference>